<keyword id="KW-0007">Acetylation</keyword>
<keyword id="KW-0175">Coiled coil</keyword>
<keyword id="KW-0963">Cytoplasm</keyword>
<keyword id="KW-0968">Cytoplasmic vesicle</keyword>
<keyword id="KW-0931">ER-Golgi transport</keyword>
<keyword id="KW-0333">Golgi apparatus</keyword>
<keyword id="KW-0472">Membrane</keyword>
<keyword id="KW-0597">Phosphoprotein</keyword>
<keyword id="KW-0653">Protein transport</keyword>
<keyword id="KW-1185">Reference proteome</keyword>
<keyword id="KW-0677">Repeat</keyword>
<keyword id="KW-0813">Transport</keyword>
<keyword id="KW-0853">WD repeat</keyword>
<name>COPB2_MACFA</name>
<protein>
    <recommendedName>
        <fullName>Coatomer subunit beta'</fullName>
    </recommendedName>
    <alternativeName>
        <fullName>Beta'-coat protein</fullName>
        <shortName>Beta'-COP</shortName>
    </alternativeName>
</protein>
<sequence length="906" mass="102270">MPLRLDIKRKLTARSDRVKSVDLHPTEPWMLASLYNGSVCVWNHETQTLVKTFEVCDLPVRAAKFVARKNWVVTGADDMQIRVFNYNTLERVHMFEAHSDYIRCIAVHPTQPFILTSSDDMLIKLWDWDKKWSCSQVFEGHTHYVMQIVINPKDNNQFASASLDRTIKVWQLGSSSPNFTLEGHEKGVNCIDYYSGGDKPYLISGADDRLVKIWDYQNKTCVQTLEGHAQNVSCASFHPELPIIITGSEDGTVRIWHSSTYRLESTLNYGMERVWCVASLRGSNNVALGCDEGSIIVKLGREEPAMSMDANGKIIWAKHSEVQQANLKAMGNAEIKDGERLPLAVKDMGSCEIYPQTIQHNPNGRFVVVCGDGEYIIYTAMALRNKSFGSAQEFAWAHDSSEYAIRESNSVVKIFKNFKEKKSFKPDFGAESIYGGFLLGVRSVNGLAFYDWDNTELIRRIEIQPKHIFWSGSGELVCIATEESFFILKYLSEKVLAAQETHEGVTEDGIEDAFEVLGEIQEIVKTGLWVGDCFIYTSSVNRLNYYVGGEIVTIAHLDRTMYLLGYIPKDNRLYLGDKELNIVSYSLLVSVLEYQTAVMRRDFSMADKVLPTIPKEQRTRVAHFLEKQGFKQQALTVSTDPEHRFELALQLGELKIAYQLAVEAESEQKWKQLAELAISKCQFGLAQECLHHAQDYGGLLLLATASGNANMVNKLAEGAERDGKNNVAFMSYFLQGKVDACLELLIRTGRLPEAAFLARTYLPSQVSRVVKLWRENLSKVNQKAAESLADPTEYENLFPGLKEAFVVEEWVKETHADLWPAKQHPLVTPNEERNVMEEAKGFQPSRSTAQQELDGKPASPTPVIVASHTANKEEKSLLELEVDLDNLELEDIDTTDINLDEDILDD</sequence>
<dbReference type="EMBL" id="AB169906">
    <property type="protein sequence ID" value="BAE01987.1"/>
    <property type="molecule type" value="mRNA"/>
</dbReference>
<dbReference type="RefSeq" id="NP_001270222.1">
    <property type="nucleotide sequence ID" value="NM_001283293.1"/>
</dbReference>
<dbReference type="SMR" id="Q4R4I8"/>
<dbReference type="STRING" id="9541.ENSMFAP00000015545"/>
<dbReference type="eggNOG" id="KOG0276">
    <property type="taxonomic scope" value="Eukaryota"/>
</dbReference>
<dbReference type="Proteomes" id="UP000233100">
    <property type="component" value="Unplaced"/>
</dbReference>
<dbReference type="GO" id="GO:0030126">
    <property type="term" value="C:COPI vesicle coat"/>
    <property type="evidence" value="ECO:0007669"/>
    <property type="project" value="TreeGrafter"/>
</dbReference>
<dbReference type="GO" id="GO:0005829">
    <property type="term" value="C:cytosol"/>
    <property type="evidence" value="ECO:0007669"/>
    <property type="project" value="UniProtKB-SubCell"/>
</dbReference>
<dbReference type="GO" id="GO:0000139">
    <property type="term" value="C:Golgi membrane"/>
    <property type="evidence" value="ECO:0007669"/>
    <property type="project" value="UniProtKB-SubCell"/>
</dbReference>
<dbReference type="GO" id="GO:0005198">
    <property type="term" value="F:structural molecule activity"/>
    <property type="evidence" value="ECO:0007669"/>
    <property type="project" value="InterPro"/>
</dbReference>
<dbReference type="GO" id="GO:0006888">
    <property type="term" value="P:endoplasmic reticulum to Golgi vesicle-mediated transport"/>
    <property type="evidence" value="ECO:0007669"/>
    <property type="project" value="TreeGrafter"/>
</dbReference>
<dbReference type="GO" id="GO:0006891">
    <property type="term" value="P:intra-Golgi vesicle-mediated transport"/>
    <property type="evidence" value="ECO:0007669"/>
    <property type="project" value="TreeGrafter"/>
</dbReference>
<dbReference type="GO" id="GO:0006886">
    <property type="term" value="P:intracellular protein transport"/>
    <property type="evidence" value="ECO:0007669"/>
    <property type="project" value="InterPro"/>
</dbReference>
<dbReference type="GO" id="GO:0006890">
    <property type="term" value="P:retrograde vesicle-mediated transport, Golgi to endoplasmic reticulum"/>
    <property type="evidence" value="ECO:0000250"/>
    <property type="project" value="UniProtKB"/>
</dbReference>
<dbReference type="CDD" id="cd22947">
    <property type="entry name" value="Coatomer_WDAD_beta-like"/>
    <property type="match status" value="1"/>
</dbReference>
<dbReference type="CDD" id="cd00200">
    <property type="entry name" value="WD40"/>
    <property type="match status" value="1"/>
</dbReference>
<dbReference type="FunFam" id="1.25.40.470:FF:000001">
    <property type="entry name" value="Coatomer subunit beta"/>
    <property type="match status" value="1"/>
</dbReference>
<dbReference type="FunFam" id="2.130.10.10:FF:000008">
    <property type="entry name" value="Coatomer subunit beta"/>
    <property type="match status" value="1"/>
</dbReference>
<dbReference type="Gene3D" id="1.25.40.470">
    <property type="match status" value="1"/>
</dbReference>
<dbReference type="Gene3D" id="2.130.10.10">
    <property type="entry name" value="YVTN repeat-like/Quinoprotein amine dehydrogenase"/>
    <property type="match status" value="1"/>
</dbReference>
<dbReference type="InterPro" id="IPR006692">
    <property type="entry name" value="Beta-prop_COPA/B_2nd"/>
</dbReference>
<dbReference type="InterPro" id="IPR050844">
    <property type="entry name" value="Coatomer_complex_subunit"/>
</dbReference>
<dbReference type="InterPro" id="IPR016453">
    <property type="entry name" value="COPB2"/>
</dbReference>
<dbReference type="InterPro" id="IPR020472">
    <property type="entry name" value="G-protein_beta_WD-40_rep"/>
</dbReference>
<dbReference type="InterPro" id="IPR056176">
    <property type="entry name" value="TPR_COPA_B"/>
</dbReference>
<dbReference type="InterPro" id="IPR015943">
    <property type="entry name" value="WD40/YVTN_repeat-like_dom_sf"/>
</dbReference>
<dbReference type="InterPro" id="IPR036322">
    <property type="entry name" value="WD40_repeat_dom_sf"/>
</dbReference>
<dbReference type="InterPro" id="IPR001680">
    <property type="entry name" value="WD40_rpt"/>
</dbReference>
<dbReference type="PANTHER" id="PTHR19876">
    <property type="entry name" value="COATOMER"/>
    <property type="match status" value="1"/>
</dbReference>
<dbReference type="PANTHER" id="PTHR19876:SF2">
    <property type="entry name" value="COATOMER SUBUNIT BETA"/>
    <property type="match status" value="1"/>
</dbReference>
<dbReference type="Pfam" id="PF04053">
    <property type="entry name" value="B-prop_COPA_B_2nd"/>
    <property type="match status" value="1"/>
</dbReference>
<dbReference type="Pfam" id="PF23953">
    <property type="entry name" value="TPR_COPA_B"/>
    <property type="match status" value="1"/>
</dbReference>
<dbReference type="Pfam" id="PF00400">
    <property type="entry name" value="WD40"/>
    <property type="match status" value="6"/>
</dbReference>
<dbReference type="PIRSF" id="PIRSF005567">
    <property type="entry name" value="Coatomer_beta'_subunit"/>
    <property type="match status" value="1"/>
</dbReference>
<dbReference type="PRINTS" id="PR00320">
    <property type="entry name" value="GPROTEINBRPT"/>
</dbReference>
<dbReference type="SMART" id="SM00320">
    <property type="entry name" value="WD40"/>
    <property type="match status" value="6"/>
</dbReference>
<dbReference type="SUPFAM" id="SSF50978">
    <property type="entry name" value="WD40 repeat-like"/>
    <property type="match status" value="2"/>
</dbReference>
<dbReference type="PROSITE" id="PS50082">
    <property type="entry name" value="WD_REPEATS_2"/>
    <property type="match status" value="5"/>
</dbReference>
<dbReference type="PROSITE" id="PS50294">
    <property type="entry name" value="WD_REPEATS_REGION"/>
    <property type="match status" value="1"/>
</dbReference>
<organism>
    <name type="scientific">Macaca fascicularis</name>
    <name type="common">Crab-eating macaque</name>
    <name type="synonym">Cynomolgus monkey</name>
    <dbReference type="NCBI Taxonomy" id="9541"/>
    <lineage>
        <taxon>Eukaryota</taxon>
        <taxon>Metazoa</taxon>
        <taxon>Chordata</taxon>
        <taxon>Craniata</taxon>
        <taxon>Vertebrata</taxon>
        <taxon>Euteleostomi</taxon>
        <taxon>Mammalia</taxon>
        <taxon>Eutheria</taxon>
        <taxon>Euarchontoglires</taxon>
        <taxon>Primates</taxon>
        <taxon>Haplorrhini</taxon>
        <taxon>Catarrhini</taxon>
        <taxon>Cercopithecidae</taxon>
        <taxon>Cercopithecinae</taxon>
        <taxon>Macaca</taxon>
    </lineage>
</organism>
<evidence type="ECO:0000250" key="1"/>
<evidence type="ECO:0000250" key="2">
    <source>
        <dbReference type="UniProtKB" id="P35606"/>
    </source>
</evidence>
<evidence type="ECO:0000255" key="3"/>
<evidence type="ECO:0000256" key="4">
    <source>
        <dbReference type="SAM" id="MobiDB-lite"/>
    </source>
</evidence>
<evidence type="ECO:0000305" key="5"/>
<reference key="1">
    <citation type="submission" date="2005-06" db="EMBL/GenBank/DDBJ databases">
        <title>DNA sequences of macaque genes expressed in brain or testis and its evolutionary implications.</title>
        <authorList>
            <consortium name="International consortium for macaque cDNA sequencing and analysis"/>
        </authorList>
    </citation>
    <scope>NUCLEOTIDE SEQUENCE [LARGE SCALE MRNA]</scope>
    <source>
        <tissue>Temporal cortex</tissue>
    </source>
</reference>
<gene>
    <name type="primary">COPB2</name>
    <name type="ORF">QtrA-12583</name>
</gene>
<accession>Q4R4I8</accession>
<proteinExistence type="evidence at transcript level"/>
<comment type="function">
    <text evidence="2">The coatomer is a cytosolic protein complex that binds to dilysine motifs and reversibly associates with Golgi non-clathrin-coated vesicles, which further mediate biosynthetic protein transport from the ER, via the Golgi up to the trans Golgi network. Coatomer complex is required for budding from Golgi membranes, and is essential for the retrograde Golgi-to-ER transport of dilysine-tagged proteins. In mammals, the coatomer can only be recruited by membranes associated to ADP-ribosylation factors (ARFs), which are small GTP-binding proteins; the complex also influences the Golgi structural integrity, as well as the processing, activity, and endocytic recycling of LDL receptors (By similarity).</text>
</comment>
<comment type="function">
    <text evidence="1">This coatomer complex protein, essential for Golgi budding and vesicular trafficking, is a selective binding protein (RACK) for protein kinase C, epsilon type. It binds to Golgi membranes in a GTP-dependent manner (By similarity).</text>
</comment>
<comment type="subunit">
    <text evidence="1 2">Oligomeric complex that consists of at least the alpha, beta, beta', gamma, delta, epsilon and zeta subunits. Probably interacts with PEX11A. Interacts with SCYL1. Interacts with JAGN1 (By similarity).</text>
</comment>
<comment type="subcellular location">
    <subcellularLocation>
        <location evidence="1">Cytoplasm</location>
        <location evidence="1">Cytosol</location>
    </subcellularLocation>
    <subcellularLocation>
        <location evidence="1">Golgi apparatus membrane</location>
        <topology evidence="1">Peripheral membrane protein</topology>
        <orientation evidence="1">Cytoplasmic side</orientation>
    </subcellularLocation>
    <subcellularLocation>
        <location evidence="1">Cytoplasmic vesicle</location>
        <location evidence="1">COPI-coated vesicle membrane</location>
        <topology evidence="1">Peripheral membrane protein</topology>
        <orientation evidence="1">Cytoplasmic side</orientation>
    </subcellularLocation>
    <text evidence="1">The coatomer is cytoplasmic or polymerized on the cytoplasmic side of the Golgi, as well as on the vesicles/buds originating from it. Shows only a slight preference for the cis-Golgi apparatus, compared with the trans-Golgi.</text>
</comment>
<comment type="similarity">
    <text evidence="5">Belongs to the WD repeat COPB2 family.</text>
</comment>
<feature type="chain" id="PRO_0000330862" description="Coatomer subunit beta'">
    <location>
        <begin position="1"/>
        <end position="906"/>
    </location>
</feature>
<feature type="repeat" description="WD 1">
    <location>
        <begin position="13"/>
        <end position="52"/>
    </location>
</feature>
<feature type="repeat" description="WD 2">
    <location>
        <begin position="55"/>
        <end position="94"/>
    </location>
</feature>
<feature type="repeat" description="WD 3">
    <location>
        <begin position="97"/>
        <end position="136"/>
    </location>
</feature>
<feature type="repeat" description="WD 4">
    <location>
        <begin position="140"/>
        <end position="180"/>
    </location>
</feature>
<feature type="repeat" description="WD 5">
    <location>
        <begin position="183"/>
        <end position="224"/>
    </location>
</feature>
<feature type="repeat" description="WD 6">
    <location>
        <begin position="227"/>
        <end position="266"/>
    </location>
</feature>
<feature type="repeat" description="WD 7">
    <location>
        <begin position="350"/>
        <end position="388"/>
    </location>
</feature>
<feature type="repeat" description="WD 8">
    <location>
        <begin position="390"/>
        <end position="425"/>
    </location>
</feature>
<feature type="repeat" description="WD 9">
    <location>
        <begin position="746"/>
        <end position="783"/>
    </location>
</feature>
<feature type="region of interest" description="Disordered" evidence="4">
    <location>
        <begin position="837"/>
        <end position="862"/>
    </location>
</feature>
<feature type="coiled-coil region" evidence="3">
    <location>
        <begin position="866"/>
        <end position="890"/>
    </location>
</feature>
<feature type="modified residue" description="N6-acetyllysine" evidence="2">
    <location>
        <position position="627"/>
    </location>
</feature>
<feature type="modified residue" description="Phosphoserine" evidence="2">
    <location>
        <position position="859"/>
    </location>
</feature>
<feature type="modified residue" description="Phosphothreonine" evidence="2">
    <location>
        <position position="861"/>
    </location>
</feature>